<proteinExistence type="inferred from homology"/>
<keyword id="KW-0501">Molybdenum cofactor biosynthesis</keyword>
<keyword id="KW-0808">Transferase</keyword>
<comment type="function">
    <text evidence="1">Converts molybdopterin precursor Z into molybdopterin. This requires the incorporation of two sulfur atoms into precursor Z to generate a dithiolene group. The sulfur is provided by MoaD (By similarity).</text>
</comment>
<comment type="catalytic activity">
    <reaction>
        <text>2 [molybdopterin-synthase sulfur-carrier protein]-C-terminal-Gly-aminoethanethioate + cyclic pyranopterin phosphate + H2O = molybdopterin + 2 [molybdopterin-synthase sulfur-carrier protein]-C-terminal Gly-Gly + 2 H(+)</text>
        <dbReference type="Rhea" id="RHEA:26333"/>
        <dbReference type="Rhea" id="RHEA-COMP:12202"/>
        <dbReference type="Rhea" id="RHEA-COMP:19907"/>
        <dbReference type="ChEBI" id="CHEBI:15377"/>
        <dbReference type="ChEBI" id="CHEBI:15378"/>
        <dbReference type="ChEBI" id="CHEBI:58698"/>
        <dbReference type="ChEBI" id="CHEBI:59648"/>
        <dbReference type="ChEBI" id="CHEBI:90778"/>
        <dbReference type="ChEBI" id="CHEBI:232372"/>
        <dbReference type="EC" id="2.8.1.12"/>
    </reaction>
</comment>
<comment type="pathway">
    <text>Cofactor biosynthesis; molybdopterin biosynthesis.</text>
</comment>
<comment type="subunit">
    <text evidence="1">Heterotetramer of 2 MoaD subunits and 2 MoaE subunits. Also stable as homodimer. The enzyme changes between these two forms during catalysis (By similarity).</text>
</comment>
<comment type="similarity">
    <text evidence="3">Belongs to the MoaE family.</text>
</comment>
<feature type="chain" id="PRO_0000163080" description="Molybdopterin synthase catalytic subunit">
    <location>
        <begin position="1"/>
        <end position="163"/>
    </location>
</feature>
<feature type="region of interest" description="Disordered" evidence="2">
    <location>
        <begin position="138"/>
        <end position="163"/>
    </location>
</feature>
<feature type="compositionally biased region" description="Basic and acidic residues" evidence="2">
    <location>
        <begin position="151"/>
        <end position="163"/>
    </location>
</feature>
<feature type="binding site" evidence="1">
    <location>
        <begin position="43"/>
        <end position="45"/>
    </location>
    <ligand>
        <name>substrate</name>
    </ligand>
</feature>
<feature type="binding site" evidence="1">
    <location>
        <begin position="107"/>
        <end position="108"/>
    </location>
    <ligand>
        <name>substrate</name>
    </ligand>
</feature>
<feature type="binding site" evidence="1">
    <location>
        <position position="123"/>
    </location>
    <ligand>
        <name>substrate</name>
    </ligand>
</feature>
<feature type="binding site" evidence="1">
    <location>
        <begin position="130"/>
        <end position="132"/>
    </location>
    <ligand>
        <name>substrate</name>
    </ligand>
</feature>
<evidence type="ECO:0000250" key="1"/>
<evidence type="ECO:0000256" key="2">
    <source>
        <dbReference type="SAM" id="MobiDB-lite"/>
    </source>
</evidence>
<evidence type="ECO:0000305" key="3"/>
<reference key="1">
    <citation type="journal article" date="2002" name="Proc. Natl. Acad. Sci. U.S.A.">
        <title>The Brucella suis genome reveals fundamental similarities between animal and plant pathogens and symbionts.</title>
        <authorList>
            <person name="Paulsen I.T."/>
            <person name="Seshadri R."/>
            <person name="Nelson K.E."/>
            <person name="Eisen J.A."/>
            <person name="Heidelberg J.F."/>
            <person name="Read T.D."/>
            <person name="Dodson R.J."/>
            <person name="Umayam L.A."/>
            <person name="Brinkac L.M."/>
            <person name="Beanan M.J."/>
            <person name="Daugherty S.C."/>
            <person name="DeBoy R.T."/>
            <person name="Durkin A.S."/>
            <person name="Kolonay J.F."/>
            <person name="Madupu R."/>
            <person name="Nelson W.C."/>
            <person name="Ayodeji B."/>
            <person name="Kraul M."/>
            <person name="Shetty J."/>
            <person name="Malek J.A."/>
            <person name="Van Aken S.E."/>
            <person name="Riedmuller S."/>
            <person name="Tettelin H."/>
            <person name="Gill S.R."/>
            <person name="White O."/>
            <person name="Salzberg S.L."/>
            <person name="Hoover D.L."/>
            <person name="Lindler L.E."/>
            <person name="Halling S.M."/>
            <person name="Boyle S.M."/>
            <person name="Fraser C.M."/>
        </authorList>
    </citation>
    <scope>NUCLEOTIDE SEQUENCE [LARGE SCALE GENOMIC DNA]</scope>
    <source>
        <strain>1330</strain>
    </source>
</reference>
<reference key="2">
    <citation type="journal article" date="2011" name="J. Bacteriol.">
        <title>Revised genome sequence of Brucella suis 1330.</title>
        <authorList>
            <person name="Tae H."/>
            <person name="Shallom S."/>
            <person name="Settlage R."/>
            <person name="Preston D."/>
            <person name="Adams L.G."/>
            <person name="Garner H.R."/>
        </authorList>
    </citation>
    <scope>NUCLEOTIDE SEQUENCE [LARGE SCALE GENOMIC DNA]</scope>
    <source>
        <strain>1330</strain>
    </source>
</reference>
<name>MOAE_BRUSU</name>
<dbReference type="EC" id="2.8.1.12"/>
<dbReference type="EMBL" id="AE014291">
    <property type="protein sequence ID" value="AAN29625.1"/>
    <property type="molecule type" value="Genomic_DNA"/>
</dbReference>
<dbReference type="EMBL" id="CP002997">
    <property type="protein sequence ID" value="AEM18042.1"/>
    <property type="molecule type" value="Genomic_DNA"/>
</dbReference>
<dbReference type="RefSeq" id="WP_002963838.1">
    <property type="nucleotide sequence ID" value="NZ_KN046804.1"/>
</dbReference>
<dbReference type="SMR" id="P65397"/>
<dbReference type="KEGG" id="bms:BR0696"/>
<dbReference type="KEGG" id="bsi:BS1330_I0692"/>
<dbReference type="PATRIC" id="fig|204722.21.peg.1479"/>
<dbReference type="HOGENOM" id="CLU_089568_2_1_5"/>
<dbReference type="PhylomeDB" id="P65397"/>
<dbReference type="UniPathway" id="UPA00344"/>
<dbReference type="Proteomes" id="UP000007104">
    <property type="component" value="Chromosome I"/>
</dbReference>
<dbReference type="GO" id="GO:0030366">
    <property type="term" value="F:molybdopterin synthase activity"/>
    <property type="evidence" value="ECO:0007669"/>
    <property type="project" value="UniProtKB-EC"/>
</dbReference>
<dbReference type="GO" id="GO:0006777">
    <property type="term" value="P:Mo-molybdopterin cofactor biosynthetic process"/>
    <property type="evidence" value="ECO:0007669"/>
    <property type="project" value="UniProtKB-KW"/>
</dbReference>
<dbReference type="CDD" id="cd00756">
    <property type="entry name" value="MoaE"/>
    <property type="match status" value="1"/>
</dbReference>
<dbReference type="Gene3D" id="3.90.1170.40">
    <property type="entry name" value="Molybdopterin biosynthesis MoaE subunit"/>
    <property type="match status" value="1"/>
</dbReference>
<dbReference type="InterPro" id="IPR036563">
    <property type="entry name" value="MoaE_sf"/>
</dbReference>
<dbReference type="InterPro" id="IPR003448">
    <property type="entry name" value="Mopterin_biosynth_MoaE"/>
</dbReference>
<dbReference type="PANTHER" id="PTHR23404">
    <property type="entry name" value="MOLYBDOPTERIN SYNTHASE RELATED"/>
    <property type="match status" value="1"/>
</dbReference>
<dbReference type="Pfam" id="PF02391">
    <property type="entry name" value="MoaE"/>
    <property type="match status" value="1"/>
</dbReference>
<dbReference type="SUPFAM" id="SSF54690">
    <property type="entry name" value="Molybdopterin synthase subunit MoaE"/>
    <property type="match status" value="1"/>
</dbReference>
<gene>
    <name type="primary">moaE</name>
    <name type="ordered locus">BR0696</name>
    <name type="ordered locus">BS1330_I0692</name>
</gene>
<accession>P65397</accession>
<accession>G0K837</accession>
<accession>Q8YGA6</accession>
<sequence>MDGQPTCPLSISVRSEDFDIAAEIDRIGKNRREIGAIVTFTGLCRDEDGQLAALELEHYPGMAQAEISRMAKQALERWPLNGLTIIHRYGLIKPGENIVLVVAASRHRHAAFEAASFLMDYMKTNAPFWKREHLADGTAGGWVSSKEEDEESRKRWEEPRKSE</sequence>
<protein>
    <recommendedName>
        <fullName>Molybdopterin synthase catalytic subunit</fullName>
        <ecNumber>2.8.1.12</ecNumber>
    </recommendedName>
    <alternativeName>
        <fullName>MPT synthase subunit 2</fullName>
    </alternativeName>
    <alternativeName>
        <fullName>Molybdenum cofactor biosynthesis protein E</fullName>
    </alternativeName>
    <alternativeName>
        <fullName>Molybdopterin-converting factor large subunit</fullName>
    </alternativeName>
    <alternativeName>
        <fullName>Molybdopterin-converting factor subunit 2</fullName>
    </alternativeName>
</protein>
<organism>
    <name type="scientific">Brucella suis biovar 1 (strain 1330)</name>
    <dbReference type="NCBI Taxonomy" id="204722"/>
    <lineage>
        <taxon>Bacteria</taxon>
        <taxon>Pseudomonadati</taxon>
        <taxon>Pseudomonadota</taxon>
        <taxon>Alphaproteobacteria</taxon>
        <taxon>Hyphomicrobiales</taxon>
        <taxon>Brucellaceae</taxon>
        <taxon>Brucella/Ochrobactrum group</taxon>
        <taxon>Brucella</taxon>
    </lineage>
</organism>